<organism>
    <name type="scientific">Bovine coronavirus (strain Ontario)</name>
    <name type="common">BCoV</name>
    <name type="synonym">BCV</name>
    <dbReference type="NCBI Taxonomy" id="231422"/>
    <lineage>
        <taxon>Viruses</taxon>
        <taxon>Riboviria</taxon>
        <taxon>Orthornavirae</taxon>
        <taxon>Pisuviricota</taxon>
        <taxon>Pisoniviricetes</taxon>
        <taxon>Nidovirales</taxon>
        <taxon>Cornidovirineae</taxon>
        <taxon>Coronaviridae</taxon>
        <taxon>Orthocoronavirinae</taxon>
        <taxon>Betacoronavirus</taxon>
        <taxon>Embecovirus</taxon>
        <taxon>Betacoronavirus 1</taxon>
    </lineage>
</organism>
<organismHost>
    <name type="scientific">Bos taurus</name>
    <name type="common">Bovine</name>
    <dbReference type="NCBI Taxonomy" id="9913"/>
</organismHost>
<reference key="1">
    <citation type="journal article" date="2001" name="Virus Res.">
        <title>Bovine coronaviruses associated with enteric and respiratory diseases in Canadian dairy cattle display different reactivities to anti-HE monoclonal antibodies and distinct amino acid changes in their HE, S and ns4.9 protein.</title>
        <authorList>
            <person name="Gelinas A.-M."/>
            <person name="Boutin M."/>
            <person name="Sasseville A.M.-J."/>
            <person name="Dea S."/>
        </authorList>
    </citation>
    <scope>NUCLEOTIDE SEQUENCE [GENOMIC RNA]</scope>
    <source>
        <strain>Isolate BCO.44175</strain>
    </source>
</reference>
<protein>
    <recommendedName>
        <fullName>Truncated non-structural protein of 4.9 kDa</fullName>
        <shortName>Truncated ns4.9</shortName>
    </recommendedName>
    <alternativeName>
        <fullName>Truncated 4.9 kDa accessory protein</fullName>
    </alternativeName>
</protein>
<accession>P0C2R7</accession>
<accession>Q9DH48</accession>
<proteinExistence type="inferred from homology"/>
<feature type="chain" id="PRO_0000283944" description="Truncated non-structural protein of 4.9 kDa">
    <location>
        <begin position="1"/>
        <end position="29"/>
    </location>
</feature>
<dbReference type="EMBL" id="AH010063">
    <property type="protein sequence ID" value="AAG40624.1"/>
    <property type="molecule type" value="Genomic_DNA"/>
</dbReference>
<dbReference type="InterPro" id="IPR009314">
    <property type="entry name" value="Corona_NS1"/>
</dbReference>
<dbReference type="Pfam" id="PF06145">
    <property type="entry name" value="Corona_NS1"/>
    <property type="match status" value="1"/>
</dbReference>
<evidence type="ECO:0000305" key="1"/>
<name>NS49_CVBON</name>
<comment type="similarity">
    <text evidence="1">Belongs to the coronaviruses ns4.9 protein family.</text>
</comment>
<sequence length="29" mass="3374">MKTKFVFDLLAPDDILHPSNHVNLIIRLI</sequence>
<gene>
    <name type="ORF">4a</name>
</gene>